<name>SAT_RUBXD</name>
<gene>
    <name evidence="1" type="primary">sat</name>
    <name type="ordered locus">Rxyl_0966</name>
</gene>
<feature type="chain" id="PRO_0000340630" description="Sulfate adenylyltransferase">
    <location>
        <begin position="1"/>
        <end position="393"/>
    </location>
</feature>
<dbReference type="EC" id="2.7.7.4" evidence="1"/>
<dbReference type="EMBL" id="CP000386">
    <property type="protein sequence ID" value="ABG03933.1"/>
    <property type="molecule type" value="Genomic_DNA"/>
</dbReference>
<dbReference type="RefSeq" id="WP_011563951.1">
    <property type="nucleotide sequence ID" value="NC_008148.1"/>
</dbReference>
<dbReference type="SMR" id="Q1AXE5"/>
<dbReference type="STRING" id="266117.Rxyl_0966"/>
<dbReference type="KEGG" id="rxy:Rxyl_0966"/>
<dbReference type="eggNOG" id="COG2046">
    <property type="taxonomic scope" value="Bacteria"/>
</dbReference>
<dbReference type="HOGENOM" id="CLU_022950_1_1_11"/>
<dbReference type="OrthoDB" id="9804504at2"/>
<dbReference type="PhylomeDB" id="Q1AXE5"/>
<dbReference type="UniPathway" id="UPA00140">
    <property type="reaction ID" value="UER00204"/>
</dbReference>
<dbReference type="Proteomes" id="UP000006637">
    <property type="component" value="Chromosome"/>
</dbReference>
<dbReference type="GO" id="GO:0005524">
    <property type="term" value="F:ATP binding"/>
    <property type="evidence" value="ECO:0007669"/>
    <property type="project" value="UniProtKB-KW"/>
</dbReference>
<dbReference type="GO" id="GO:0004781">
    <property type="term" value="F:sulfate adenylyltransferase (ATP) activity"/>
    <property type="evidence" value="ECO:0007669"/>
    <property type="project" value="UniProtKB-UniRule"/>
</dbReference>
<dbReference type="GO" id="GO:0070814">
    <property type="term" value="P:hydrogen sulfide biosynthetic process"/>
    <property type="evidence" value="ECO:0007669"/>
    <property type="project" value="UniProtKB-UniRule"/>
</dbReference>
<dbReference type="GO" id="GO:0000103">
    <property type="term" value="P:sulfate assimilation"/>
    <property type="evidence" value="ECO:0007669"/>
    <property type="project" value="UniProtKB-UniRule"/>
</dbReference>
<dbReference type="CDD" id="cd00517">
    <property type="entry name" value="ATPS"/>
    <property type="match status" value="1"/>
</dbReference>
<dbReference type="Gene3D" id="3.40.50.620">
    <property type="entry name" value="HUPs"/>
    <property type="match status" value="1"/>
</dbReference>
<dbReference type="Gene3D" id="3.10.400.10">
    <property type="entry name" value="Sulfate adenylyltransferase"/>
    <property type="match status" value="1"/>
</dbReference>
<dbReference type="HAMAP" id="MF_00066">
    <property type="entry name" value="Sulf_adenylyltr"/>
    <property type="match status" value="1"/>
</dbReference>
<dbReference type="InterPro" id="IPR025980">
    <property type="entry name" value="ATP-Sase_PUA-like_dom"/>
</dbReference>
<dbReference type="InterPro" id="IPR015947">
    <property type="entry name" value="PUA-like_sf"/>
</dbReference>
<dbReference type="InterPro" id="IPR014729">
    <property type="entry name" value="Rossmann-like_a/b/a_fold"/>
</dbReference>
<dbReference type="InterPro" id="IPR020792">
    <property type="entry name" value="SO4_adenylyltransferase_pro"/>
</dbReference>
<dbReference type="InterPro" id="IPR024951">
    <property type="entry name" value="Sulfurylase_cat_dom"/>
</dbReference>
<dbReference type="InterPro" id="IPR002650">
    <property type="entry name" value="Sulphate_adenylyltransferase"/>
</dbReference>
<dbReference type="NCBIfam" id="NF003166">
    <property type="entry name" value="PRK04149.1"/>
    <property type="match status" value="1"/>
</dbReference>
<dbReference type="NCBIfam" id="TIGR00339">
    <property type="entry name" value="sopT"/>
    <property type="match status" value="1"/>
</dbReference>
<dbReference type="PANTHER" id="PTHR43509">
    <property type="match status" value="1"/>
</dbReference>
<dbReference type="PANTHER" id="PTHR43509:SF1">
    <property type="entry name" value="SULFATE ADENYLYLTRANSFERASE"/>
    <property type="match status" value="1"/>
</dbReference>
<dbReference type="Pfam" id="PF01747">
    <property type="entry name" value="ATP-sulfurylase"/>
    <property type="match status" value="1"/>
</dbReference>
<dbReference type="Pfam" id="PF14306">
    <property type="entry name" value="PUA_2"/>
    <property type="match status" value="1"/>
</dbReference>
<dbReference type="SUPFAM" id="SSF52374">
    <property type="entry name" value="Nucleotidylyl transferase"/>
    <property type="match status" value="1"/>
</dbReference>
<dbReference type="SUPFAM" id="SSF88697">
    <property type="entry name" value="PUA domain-like"/>
    <property type="match status" value="1"/>
</dbReference>
<keyword id="KW-0067">ATP-binding</keyword>
<keyword id="KW-0547">Nucleotide-binding</keyword>
<keyword id="KW-0548">Nucleotidyltransferase</keyword>
<keyword id="KW-1185">Reference proteome</keyword>
<keyword id="KW-0808">Transferase</keyword>
<accession>Q1AXE5</accession>
<reference key="1">
    <citation type="submission" date="2006-06" db="EMBL/GenBank/DDBJ databases">
        <title>Complete sequence of Rubrobacter xylanophilus DSM 9941.</title>
        <authorList>
            <consortium name="US DOE Joint Genome Institute"/>
            <person name="Copeland A."/>
            <person name="Lucas S."/>
            <person name="Lapidus A."/>
            <person name="Barry K."/>
            <person name="Detter J.C."/>
            <person name="Glavina del Rio T."/>
            <person name="Hammon N."/>
            <person name="Israni S."/>
            <person name="Dalin E."/>
            <person name="Tice H."/>
            <person name="Pitluck S."/>
            <person name="Munk A.C."/>
            <person name="Brettin T."/>
            <person name="Bruce D."/>
            <person name="Han C."/>
            <person name="Tapia R."/>
            <person name="Gilna P."/>
            <person name="Schmutz J."/>
            <person name="Larimer F."/>
            <person name="Land M."/>
            <person name="Hauser L."/>
            <person name="Kyrpides N."/>
            <person name="Lykidis A."/>
            <person name="da Costa M.S."/>
            <person name="Rainey F.A."/>
            <person name="Empadinhas N."/>
            <person name="Jolivet E."/>
            <person name="Battista J.R."/>
            <person name="Richardson P."/>
        </authorList>
    </citation>
    <scope>NUCLEOTIDE SEQUENCE [LARGE SCALE GENOMIC DNA]</scope>
    <source>
        <strain>DSM 9941 / JCM 11954 / NBRC 16129 / PRD-1</strain>
    </source>
</reference>
<protein>
    <recommendedName>
        <fullName evidence="1">Sulfate adenylyltransferase</fullName>
        <ecNumber evidence="1">2.7.7.4</ecNumber>
    </recommendedName>
    <alternativeName>
        <fullName evidence="1">ATP-sulfurylase</fullName>
    </alternativeName>
    <alternativeName>
        <fullName evidence="1">Sulfate adenylate transferase</fullName>
        <shortName evidence="1">SAT</shortName>
    </alternativeName>
</protein>
<organism>
    <name type="scientific">Rubrobacter xylanophilus (strain DSM 9941 / JCM 11954 / NBRC 16129 / PRD-1)</name>
    <dbReference type="NCBI Taxonomy" id="266117"/>
    <lineage>
        <taxon>Bacteria</taxon>
        <taxon>Bacillati</taxon>
        <taxon>Actinomycetota</taxon>
        <taxon>Rubrobacteria</taxon>
        <taxon>Rubrobacterales</taxon>
        <taxon>Rubrobacteraceae</taxon>
        <taxon>Rubrobacter</taxon>
    </lineage>
</organism>
<proteinExistence type="inferred from homology"/>
<comment type="catalytic activity">
    <reaction evidence="1">
        <text>sulfate + ATP + H(+) = adenosine 5'-phosphosulfate + diphosphate</text>
        <dbReference type="Rhea" id="RHEA:18133"/>
        <dbReference type="ChEBI" id="CHEBI:15378"/>
        <dbReference type="ChEBI" id="CHEBI:16189"/>
        <dbReference type="ChEBI" id="CHEBI:30616"/>
        <dbReference type="ChEBI" id="CHEBI:33019"/>
        <dbReference type="ChEBI" id="CHEBI:58243"/>
        <dbReference type="EC" id="2.7.7.4"/>
    </reaction>
</comment>
<comment type="pathway">
    <text evidence="1">Sulfur metabolism; hydrogen sulfide biosynthesis; sulfite from sulfate: step 1/3.</text>
</comment>
<comment type="similarity">
    <text evidence="1">Belongs to the sulfate adenylyltransferase family.</text>
</comment>
<sequence length="393" mass="44645">MMRTEYTTITPHGGTLVDRRVPVGEREERRQRAAELPRIVLGPRNLSDLEMIGTGVFSPLTGFMGREDYESVVEEMRLADGLPWSIPITLSVSEEEARSFEEGDEVALANGEGEIVATMVVEDRYTYDRAHEAKLVYRTTDTDHPGVAALFRQGDVLVGGEVSLLDDGTTTRPFPRYYYEPRELRAIFRQKGWRRVVGFQTRNPVHRAHEYIQKSALETVDGLLLNPLVGETKSDDIPAHVRMRSYEVLLERYYPRDRTVLAVFPAAMRYAGPREAVFHAICRKNYGCTHFIVGRDHAGVGNYYGTYDAHRIFDEFEPGELGITPLFFEHAFFCLNCGGMATTKTCPHDKDSHVFFSGTRVREMLRNGEYPPPEFSRPEVIEVLISGLRQQEG</sequence>
<evidence type="ECO:0000255" key="1">
    <source>
        <dbReference type="HAMAP-Rule" id="MF_00066"/>
    </source>
</evidence>